<feature type="signal peptide" evidence="1">
    <location>
        <begin position="1"/>
        <end position="19"/>
    </location>
</feature>
<feature type="chain" id="PRO_0000447411" description="Crinkler effector protein 16">
    <location>
        <begin position="20"/>
        <end position="618"/>
    </location>
</feature>
<feature type="region of interest" description="LQLFLAK domain" evidence="6">
    <location>
        <begin position="18"/>
        <end position="57"/>
    </location>
</feature>
<feature type="region of interest" description="DWL domain" evidence="6">
    <location>
        <begin position="58"/>
        <end position="139"/>
    </location>
</feature>
<feature type="short sequence motif" description="HVLVXXP motif" evidence="6">
    <location>
        <begin position="140"/>
        <end position="146"/>
    </location>
</feature>
<feature type="glycosylation site" description="N-linked (GlcNAc...) asparagine" evidence="2">
    <location>
        <position position="534"/>
    </location>
</feature>
<comment type="function">
    <text evidence="6">Secreted effector that elicits necrosis in host plants, a characteristic of plant innate immunity.</text>
</comment>
<comment type="subcellular location">
    <subcellularLocation>
        <location evidence="3">Secreted</location>
    </subcellularLocation>
    <subcellularLocation>
        <location evidence="3">Host nucleus</location>
    </subcellularLocation>
</comment>
<comment type="domain">
    <text evidence="3">The CRN proteins have modular architectures that include a signal peptide, a conserved N-terminus, and highly diverse C-terminal domains. The conserved CRN N-terminus harbors a distinct LXLFLAK motif, which is followed by the conserved DWL domain. A highly conserved HVLVXXP motif marks the end of the CRN N-terminal domains and forms a junction where diverse C-terminal domains are fused. The conserved CRN N-terminus mediates the translocation into the plant host cells.</text>
</comment>
<comment type="similarity">
    <text evidence="5">Belongs to the Crinkler effector family.</text>
</comment>
<sequence>MVVVSLQCAIVGQAGSSFDVEIDDGAKVSKLKDAIKAKKPNDFKVVDADKLHLFLAKQPVEDESGKEVVPVYRPSAEEMKEENLKWLPDEHRAALKLVEGESDDYIHALTAGEPILGSKTLTTWFYTKNNMELPSSEQIHVLVVVPEQGFSVPTVSQDGVFDHCINPFFLQFRTVDKVGDWLEFSSLLPLTRRQKLYIRSSYQVIANHALFNPNVGMVKYAVVTGTPGVGKSVFVYYVLWRLIKEKKRVLLFDNNGLFYFDGSTMLICLALPSKFNEQFWSPDLWCLVDSMDPTSIPGLPYRLCSVLLASTPRRDCIGEFKKQPPTADVFYMPLWSKEELATIAPMYPHAAAVWENRFDCLGGVPRLVLQDIGTNPQALLMSACSSCSLDDCIVLASIHSGVNSKTTIVQTLIHIRSQEPYREYKVVYASDLAMQLIVRTKWQHDRAKLQSLLGSSDGNPLAQSLCGYIFEFYSMDRLEQGGTFVYRELFSKKRKRTPADGTIDIPRSSQPRQVAERVEVGQHAKQLYVPGTSNYTAIDAWMPQFGGFQMTVGKTHDIKGGAADDLAKLGQNGNRLFFLLPPLYYKTFTKKTPQTIKQYAILVPYPEVRNELSASTLQ</sequence>
<dbReference type="EMBL" id="AY961464">
    <property type="protein sequence ID" value="AAY43410.1"/>
    <property type="molecule type" value="mRNA"/>
</dbReference>
<dbReference type="GlyCosmos" id="Q2M3Z7">
    <property type="glycosylation" value="1 site, No reported glycans"/>
</dbReference>
<dbReference type="VEuPathDB" id="FungiDB:PITG_14309"/>
<dbReference type="GO" id="GO:0005576">
    <property type="term" value="C:extracellular region"/>
    <property type="evidence" value="ECO:0007669"/>
    <property type="project" value="UniProtKB-SubCell"/>
</dbReference>
<dbReference type="GO" id="GO:0042025">
    <property type="term" value="C:host cell nucleus"/>
    <property type="evidence" value="ECO:0007669"/>
    <property type="project" value="UniProtKB-SubCell"/>
</dbReference>
<dbReference type="InterPro" id="IPR052980">
    <property type="entry name" value="Crinkler_effector"/>
</dbReference>
<dbReference type="InterPro" id="IPR045379">
    <property type="entry name" value="Crinkler_N"/>
</dbReference>
<dbReference type="InterPro" id="IPR027417">
    <property type="entry name" value="P-loop_NTPase"/>
</dbReference>
<dbReference type="PANTHER" id="PTHR33129:SF3">
    <property type="entry name" value="HOT SPOT (RHS) PROTEIN, PUTATIVE-RELATED"/>
    <property type="match status" value="1"/>
</dbReference>
<dbReference type="PANTHER" id="PTHR33129">
    <property type="entry name" value="PROTEIN KINASE DOMAIN-CONTAINING PROTEIN-RELATED"/>
    <property type="match status" value="1"/>
</dbReference>
<dbReference type="Pfam" id="PF20147">
    <property type="entry name" value="Crinkler"/>
    <property type="match status" value="1"/>
</dbReference>
<dbReference type="SUPFAM" id="SSF52540">
    <property type="entry name" value="P-loop containing nucleoside triphosphate hydrolases"/>
    <property type="match status" value="1"/>
</dbReference>
<evidence type="ECO:0000255" key="1"/>
<evidence type="ECO:0000255" key="2">
    <source>
        <dbReference type="PROSITE-ProRule" id="PRU00498"/>
    </source>
</evidence>
<evidence type="ECO:0000269" key="3">
    <source>
    </source>
</evidence>
<evidence type="ECO:0000303" key="4">
    <source>
    </source>
</evidence>
<evidence type="ECO:0000305" key="5"/>
<evidence type="ECO:0000305" key="6">
    <source>
    </source>
</evidence>
<gene>
    <name evidence="4" type="primary">CRN16</name>
</gene>
<keyword id="KW-0325">Glycoprotein</keyword>
<keyword id="KW-1048">Host nucleus</keyword>
<keyword id="KW-0964">Secreted</keyword>
<keyword id="KW-0732">Signal</keyword>
<keyword id="KW-0843">Virulence</keyword>
<organism>
    <name type="scientific">Phytophthora infestans</name>
    <name type="common">Potato late blight agent</name>
    <name type="synonym">Botrytis infestans</name>
    <dbReference type="NCBI Taxonomy" id="4787"/>
    <lineage>
        <taxon>Eukaryota</taxon>
        <taxon>Sar</taxon>
        <taxon>Stramenopiles</taxon>
        <taxon>Oomycota</taxon>
        <taxon>Peronosporales</taxon>
        <taxon>Peronosporaceae</taxon>
        <taxon>Phytophthora</taxon>
    </lineage>
</organism>
<reference key="1">
    <citation type="journal article" date="2006" name="Fungal Genet. Biol.">
        <title>Computational and comparative analyses of 150 full-length cDNA sequences from the oomycete plant pathogen Phytophthora infestans.</title>
        <authorList>
            <person name="Win J."/>
            <person name="Kanneganti T.D."/>
            <person name="Torto-Alalibo T."/>
            <person name="Kamoun S."/>
        </authorList>
    </citation>
    <scope>NUCLEOTIDE SEQUENCE [MRNA]</scope>
    <source>
        <strain>Isolate 88069</strain>
    </source>
</reference>
<reference key="2">
    <citation type="journal article" date="2010" name="Proc. Natl. Acad. Sci. U.S.A.">
        <title>Ancient class of translocated oomycete effectors targets the host nucleus.</title>
        <authorList>
            <person name="Schornack S."/>
            <person name="van Damme M."/>
            <person name="Bozkurt T.O."/>
            <person name="Cano L.M."/>
            <person name="Smoker M."/>
            <person name="Thines M."/>
            <person name="Gaulin E."/>
            <person name="Kamoun S."/>
            <person name="Huitema E."/>
        </authorList>
    </citation>
    <scope>DOMAIN</scope>
    <scope>SUBCELLULAR LOCATION</scope>
</reference>
<proteinExistence type="evidence at transcript level"/>
<protein>
    <recommendedName>
        <fullName evidence="4">Crinkler effector protein 16</fullName>
    </recommendedName>
</protein>
<accession>Q2M3Z7</accession>
<name>CRN16_PHYIN</name>